<proteinExistence type="inferred from homology"/>
<gene>
    <name evidence="1" type="primary">mraY</name>
    <name type="ordered locus">BB4201</name>
</gene>
<sequence>MRAIGVFEYITLRAVLACATALLIGLVAGPRVIRRLTEMKIGQAVRAYGPESHLVKTGTPTMGGALILIAIAISTLLWADWTNRFVWVVLLVTFGFGWIGWMDDYRKVVYRDPEGMPARQKFFWQATIGLVAAVYLAFAVSAPANTELWPLFKAWVGSGFTMPLPTRADLIVPFFKSVSYPLGVLGFVALTWAVIVGTSNAVNLTDGLDGLAIMPTVMVGSALGIFAYVVGRVDYSKYLLFPYIPGAAELMVLCAAIGGAGLAFLWFNAYPAQVFMGDVGALALGGALGTIAVIVRQEIVLFIMGGVFVVETLSVMVQVTWFKYTKRKYGQGRRIFRMAPLHHHFEVGGWKETQVVVRFWIITMMLVLVGLSTLKLR</sequence>
<organism>
    <name type="scientific">Bordetella bronchiseptica (strain ATCC BAA-588 / NCTC 13252 / RB50)</name>
    <name type="common">Alcaligenes bronchisepticus</name>
    <dbReference type="NCBI Taxonomy" id="257310"/>
    <lineage>
        <taxon>Bacteria</taxon>
        <taxon>Pseudomonadati</taxon>
        <taxon>Pseudomonadota</taxon>
        <taxon>Betaproteobacteria</taxon>
        <taxon>Burkholderiales</taxon>
        <taxon>Alcaligenaceae</taxon>
        <taxon>Bordetella</taxon>
    </lineage>
</organism>
<reference key="1">
    <citation type="journal article" date="2003" name="Nat. Genet.">
        <title>Comparative analysis of the genome sequences of Bordetella pertussis, Bordetella parapertussis and Bordetella bronchiseptica.</title>
        <authorList>
            <person name="Parkhill J."/>
            <person name="Sebaihia M."/>
            <person name="Preston A."/>
            <person name="Murphy L.D."/>
            <person name="Thomson N.R."/>
            <person name="Harris D.E."/>
            <person name="Holden M.T.G."/>
            <person name="Churcher C.M."/>
            <person name="Bentley S.D."/>
            <person name="Mungall K.L."/>
            <person name="Cerdeno-Tarraga A.-M."/>
            <person name="Temple L."/>
            <person name="James K.D."/>
            <person name="Harris B."/>
            <person name="Quail M.A."/>
            <person name="Achtman M."/>
            <person name="Atkin R."/>
            <person name="Baker S."/>
            <person name="Basham D."/>
            <person name="Bason N."/>
            <person name="Cherevach I."/>
            <person name="Chillingworth T."/>
            <person name="Collins M."/>
            <person name="Cronin A."/>
            <person name="Davis P."/>
            <person name="Doggett J."/>
            <person name="Feltwell T."/>
            <person name="Goble A."/>
            <person name="Hamlin N."/>
            <person name="Hauser H."/>
            <person name="Holroyd S."/>
            <person name="Jagels K."/>
            <person name="Leather S."/>
            <person name="Moule S."/>
            <person name="Norberczak H."/>
            <person name="O'Neil S."/>
            <person name="Ormond D."/>
            <person name="Price C."/>
            <person name="Rabbinowitsch E."/>
            <person name="Rutter S."/>
            <person name="Sanders M."/>
            <person name="Saunders D."/>
            <person name="Seeger K."/>
            <person name="Sharp S."/>
            <person name="Simmonds M."/>
            <person name="Skelton J."/>
            <person name="Squares R."/>
            <person name="Squares S."/>
            <person name="Stevens K."/>
            <person name="Unwin L."/>
            <person name="Whitehead S."/>
            <person name="Barrell B.G."/>
            <person name="Maskell D.J."/>
        </authorList>
    </citation>
    <scope>NUCLEOTIDE SEQUENCE [LARGE SCALE GENOMIC DNA]</scope>
    <source>
        <strain>ATCC BAA-588 / NCTC 13252 / RB50</strain>
    </source>
</reference>
<keyword id="KW-0131">Cell cycle</keyword>
<keyword id="KW-0132">Cell division</keyword>
<keyword id="KW-0997">Cell inner membrane</keyword>
<keyword id="KW-1003">Cell membrane</keyword>
<keyword id="KW-0133">Cell shape</keyword>
<keyword id="KW-0961">Cell wall biogenesis/degradation</keyword>
<keyword id="KW-0460">Magnesium</keyword>
<keyword id="KW-0472">Membrane</keyword>
<keyword id="KW-0479">Metal-binding</keyword>
<keyword id="KW-0573">Peptidoglycan synthesis</keyword>
<keyword id="KW-0808">Transferase</keyword>
<keyword id="KW-0812">Transmembrane</keyword>
<keyword id="KW-1133">Transmembrane helix</keyword>
<name>MRAY_BORBR</name>
<feature type="chain" id="PRO_0000108789" description="Phospho-N-acetylmuramoyl-pentapeptide-transferase">
    <location>
        <begin position="1"/>
        <end position="377"/>
    </location>
</feature>
<feature type="transmembrane region" description="Helical" evidence="1">
    <location>
        <begin position="9"/>
        <end position="29"/>
    </location>
</feature>
<feature type="transmembrane region" description="Helical" evidence="1">
    <location>
        <begin position="59"/>
        <end position="79"/>
    </location>
</feature>
<feature type="transmembrane region" description="Helical" evidence="1">
    <location>
        <begin position="85"/>
        <end position="105"/>
    </location>
</feature>
<feature type="transmembrane region" description="Helical" evidence="1">
    <location>
        <begin position="122"/>
        <end position="142"/>
    </location>
</feature>
<feature type="transmembrane region" description="Helical" evidence="1">
    <location>
        <begin position="155"/>
        <end position="175"/>
    </location>
</feature>
<feature type="transmembrane region" description="Helical" evidence="1">
    <location>
        <begin position="178"/>
        <end position="198"/>
    </location>
</feature>
<feature type="transmembrane region" description="Helical" evidence="1">
    <location>
        <begin position="210"/>
        <end position="230"/>
    </location>
</feature>
<feature type="transmembrane region" description="Helical" evidence="1">
    <location>
        <begin position="247"/>
        <end position="267"/>
    </location>
</feature>
<feature type="transmembrane region" description="Helical" evidence="1">
    <location>
        <begin position="274"/>
        <end position="294"/>
    </location>
</feature>
<feature type="transmembrane region" description="Helical" evidence="1">
    <location>
        <begin position="299"/>
        <end position="319"/>
    </location>
</feature>
<feature type="transmembrane region" description="Helical" evidence="1">
    <location>
        <begin position="354"/>
        <end position="374"/>
    </location>
</feature>
<dbReference type="EC" id="2.7.8.13" evidence="1"/>
<dbReference type="EMBL" id="BX640449">
    <property type="protein sequence ID" value="CAE34565.1"/>
    <property type="molecule type" value="Genomic_DNA"/>
</dbReference>
<dbReference type="SMR" id="Q7WFR9"/>
<dbReference type="KEGG" id="bbr:BB4201"/>
<dbReference type="eggNOG" id="COG0472">
    <property type="taxonomic scope" value="Bacteria"/>
</dbReference>
<dbReference type="HOGENOM" id="CLU_023982_0_0_4"/>
<dbReference type="UniPathway" id="UPA00219"/>
<dbReference type="Proteomes" id="UP000001027">
    <property type="component" value="Chromosome"/>
</dbReference>
<dbReference type="GO" id="GO:0005886">
    <property type="term" value="C:plasma membrane"/>
    <property type="evidence" value="ECO:0007669"/>
    <property type="project" value="UniProtKB-SubCell"/>
</dbReference>
<dbReference type="GO" id="GO:0046872">
    <property type="term" value="F:metal ion binding"/>
    <property type="evidence" value="ECO:0007669"/>
    <property type="project" value="UniProtKB-KW"/>
</dbReference>
<dbReference type="GO" id="GO:0008963">
    <property type="term" value="F:phospho-N-acetylmuramoyl-pentapeptide-transferase activity"/>
    <property type="evidence" value="ECO:0007669"/>
    <property type="project" value="UniProtKB-UniRule"/>
</dbReference>
<dbReference type="GO" id="GO:0051992">
    <property type="term" value="F:UDP-N-acetylmuramoyl-L-alanyl-D-glutamyl-meso-2,6-diaminopimelyl-D-alanyl-D-alanine:undecaprenyl-phosphate transferase activity"/>
    <property type="evidence" value="ECO:0007669"/>
    <property type="project" value="RHEA"/>
</dbReference>
<dbReference type="GO" id="GO:0051301">
    <property type="term" value="P:cell division"/>
    <property type="evidence" value="ECO:0007669"/>
    <property type="project" value="UniProtKB-KW"/>
</dbReference>
<dbReference type="GO" id="GO:0071555">
    <property type="term" value="P:cell wall organization"/>
    <property type="evidence" value="ECO:0007669"/>
    <property type="project" value="UniProtKB-KW"/>
</dbReference>
<dbReference type="GO" id="GO:0009252">
    <property type="term" value="P:peptidoglycan biosynthetic process"/>
    <property type="evidence" value="ECO:0007669"/>
    <property type="project" value="UniProtKB-UniRule"/>
</dbReference>
<dbReference type="GO" id="GO:0008360">
    <property type="term" value="P:regulation of cell shape"/>
    <property type="evidence" value="ECO:0007669"/>
    <property type="project" value="UniProtKB-KW"/>
</dbReference>
<dbReference type="CDD" id="cd06852">
    <property type="entry name" value="GT_MraY"/>
    <property type="match status" value="1"/>
</dbReference>
<dbReference type="HAMAP" id="MF_00038">
    <property type="entry name" value="MraY"/>
    <property type="match status" value="1"/>
</dbReference>
<dbReference type="InterPro" id="IPR000715">
    <property type="entry name" value="Glycosyl_transferase_4"/>
</dbReference>
<dbReference type="InterPro" id="IPR003524">
    <property type="entry name" value="PNAcMuramoyl-5peptid_Trfase"/>
</dbReference>
<dbReference type="InterPro" id="IPR018480">
    <property type="entry name" value="PNAcMuramoyl-5peptid_Trfase_CS"/>
</dbReference>
<dbReference type="NCBIfam" id="TIGR00445">
    <property type="entry name" value="mraY"/>
    <property type="match status" value="1"/>
</dbReference>
<dbReference type="PANTHER" id="PTHR22926">
    <property type="entry name" value="PHOSPHO-N-ACETYLMURAMOYL-PENTAPEPTIDE-TRANSFERASE"/>
    <property type="match status" value="1"/>
</dbReference>
<dbReference type="PANTHER" id="PTHR22926:SF5">
    <property type="entry name" value="PHOSPHO-N-ACETYLMURAMOYL-PENTAPEPTIDE-TRANSFERASE HOMOLOG"/>
    <property type="match status" value="1"/>
</dbReference>
<dbReference type="Pfam" id="PF00953">
    <property type="entry name" value="Glycos_transf_4"/>
    <property type="match status" value="1"/>
</dbReference>
<dbReference type="PROSITE" id="PS01347">
    <property type="entry name" value="MRAY_1"/>
    <property type="match status" value="1"/>
</dbReference>
<dbReference type="PROSITE" id="PS01348">
    <property type="entry name" value="MRAY_2"/>
    <property type="match status" value="1"/>
</dbReference>
<protein>
    <recommendedName>
        <fullName evidence="1">Phospho-N-acetylmuramoyl-pentapeptide-transferase</fullName>
        <ecNumber evidence="1">2.7.8.13</ecNumber>
    </recommendedName>
    <alternativeName>
        <fullName evidence="1">UDP-MurNAc-pentapeptide phosphotransferase</fullName>
    </alternativeName>
</protein>
<evidence type="ECO:0000255" key="1">
    <source>
        <dbReference type="HAMAP-Rule" id="MF_00038"/>
    </source>
</evidence>
<comment type="function">
    <text evidence="1">Catalyzes the initial step of the lipid cycle reactions in the biosynthesis of the cell wall peptidoglycan: transfers peptidoglycan precursor phospho-MurNAc-pentapeptide from UDP-MurNAc-pentapeptide onto the lipid carrier undecaprenyl phosphate, yielding undecaprenyl-pyrophosphoryl-MurNAc-pentapeptide, known as lipid I.</text>
</comment>
<comment type="catalytic activity">
    <reaction evidence="1">
        <text>UDP-N-acetyl-alpha-D-muramoyl-L-alanyl-gamma-D-glutamyl-meso-2,6-diaminopimeloyl-D-alanyl-D-alanine + di-trans,octa-cis-undecaprenyl phosphate = di-trans,octa-cis-undecaprenyl diphospho-N-acetyl-alpha-D-muramoyl-L-alanyl-D-glutamyl-meso-2,6-diaminopimeloyl-D-alanyl-D-alanine + UMP</text>
        <dbReference type="Rhea" id="RHEA:28386"/>
        <dbReference type="ChEBI" id="CHEBI:57865"/>
        <dbReference type="ChEBI" id="CHEBI:60392"/>
        <dbReference type="ChEBI" id="CHEBI:61386"/>
        <dbReference type="ChEBI" id="CHEBI:61387"/>
        <dbReference type="EC" id="2.7.8.13"/>
    </reaction>
</comment>
<comment type="cofactor">
    <cofactor evidence="1">
        <name>Mg(2+)</name>
        <dbReference type="ChEBI" id="CHEBI:18420"/>
    </cofactor>
</comment>
<comment type="pathway">
    <text evidence="1">Cell wall biogenesis; peptidoglycan biosynthesis.</text>
</comment>
<comment type="subcellular location">
    <subcellularLocation>
        <location evidence="1">Cell inner membrane</location>
        <topology evidence="1">Multi-pass membrane protein</topology>
    </subcellularLocation>
</comment>
<comment type="similarity">
    <text evidence="1">Belongs to the glycosyltransferase 4 family. MraY subfamily.</text>
</comment>
<accession>Q7WFR9</accession>